<reference key="1">
    <citation type="journal article" date="2016" name="Toxicon">
        <title>Antinociceptive properties of the mastoparan peptide Agelaia-MPI isolated from social wasps.</title>
        <authorList>
            <person name="Goncalves J."/>
            <person name="Rangel M."/>
            <person name="Biolchi A."/>
            <person name="Alves E."/>
            <person name="Moreira K."/>
            <person name="Silva L."/>
            <person name="Mortari M."/>
        </authorList>
    </citation>
    <scope>PROTEIN SEQUENCE</scope>
    <scope>FUNCTION</scope>
    <scope>IDENTIFICATION BY MASS SPECTROMETRY</scope>
    <scope>SUBCELLULAR LOCATION</scope>
    <source>
        <tissue>Venom</tissue>
    </source>
</reference>
<reference key="2">
    <citation type="journal article" date="2021" name="ChemBioChem">
        <title>Antimicrobial and anticancer properties of synthetic peptides derived from the wasp Parachartergus fraternus.</title>
        <authorList>
            <person name="Muller J.A.I."/>
            <person name="Lawrence N."/>
            <person name="Chan L.Y."/>
            <person name="Harvey P.J."/>
            <person name="Elliott A.G."/>
            <person name="Blaskovich M.A.T."/>
            <person name="Goncalves J.C."/>
            <person name="Galante P."/>
            <person name="Mortari M.R."/>
            <person name="Toffoli-Kadri M.C."/>
            <person name="Koehbach J."/>
            <person name="Craik D.J."/>
        </authorList>
    </citation>
    <scope>FUNCTION</scope>
    <scope>SYNTHESIS</scope>
    <scope>MUTAGENESIS OF ASN-2; 5-LYS-LEU-6 AND 10-ILE--ASP-12</scope>
</reference>
<keyword id="KW-0027">Amidation</keyword>
<keyword id="KW-0044">Antibiotic</keyword>
<keyword id="KW-0929">Antimicrobial</keyword>
<keyword id="KW-0903">Direct protein sequencing</keyword>
<keyword id="KW-0295">Fungicide</keyword>
<keyword id="KW-1213">G-protein coupled receptor impairing toxin</keyword>
<keyword id="KW-0391">Immunity</keyword>
<keyword id="KW-0399">Innate immunity</keyword>
<keyword id="KW-0467">Mast cell degranulation</keyword>
<keyword id="KW-0964">Secreted</keyword>
<keyword id="KW-0800">Toxin</keyword>
<protein>
    <recommendedName>
        <fullName evidence="2 6">Agelaia-MPI</fullName>
    </recommendedName>
</protein>
<feature type="peptide" id="PRO_0000458815" description="Agelaia-MPI" evidence="4">
    <location>
        <begin position="1"/>
        <end position="14"/>
    </location>
</feature>
<feature type="modified residue" description="Leucine amide" evidence="2">
    <location>
        <position position="14"/>
    </location>
</feature>
<feature type="mutagenesis site" description="In NeuroVAL; important decrease in hemolytic activity, important decrease in antimicrobial activity, no loss of antinociceptive activity, and acts as a non-toxic cell-penetrating peptide towards cancer and non-cancer cells; when associated with 5-F-R-6 and 10-D--V-12." evidence="5">
    <original>N</original>
    <variation>F</variation>
    <location>
        <position position="2"/>
    </location>
</feature>
<feature type="mutagenesis site" description="In NeuroVAL; important decrease in hemolytic activity, important decrease in antimicrobial activity, no loss of antinociceptive activity, and acts as a non-toxic cell-penetrating peptide towards cancer and non-cancer cells; when associated with F-2 and 10-D--V-12." evidence="5">
    <original>KL</original>
    <variation>FR</variation>
    <location>
        <begin position="5"/>
        <end position="6"/>
    </location>
</feature>
<feature type="mutagenesis site" description="In NeuroVAL; important decrease in hemolytic activity, important decrease in antimicrobial activity, no loss of antinociceptive activity, and acts as a non-toxic cell-penetrating peptide towards cancer and non-cancer cells; when associated with F-2 and 5-F-R-6." evidence="5">
    <original>IID</original>
    <variation>DV</variation>
    <location>
        <begin position="10"/>
        <end position="12"/>
    </location>
</feature>
<name>MAST1_PARFA</name>
<comment type="function">
    <text evidence="1 2 3 4 5">Antimicrobial peptide with potent activity towards many Gram-positive, and Gram-negative bacteria, as well as potent activity towards yeasts (C.albicans, C.tropicalis, and C.neoformans) (By similarity) (PubMed:33244888). Inhibits biofilm formation of A.baumannii and Staphylococcus spp. bacteria (By similarity). Also shows potent mast cell degranulation activity and potent hemolytic activity of rat erythrocytes (By similarity) (PubMed:33244888). Its mast cell degranulation activity may be related to the activation of G-protein coupled receptors in mast cells as well as interaction with other proteins located in cell endosomal membranes in the mast cells (By similarity). Due to its potent hemolytic activity, its cytotoxicity has not been tested towards cancer and non-cancer cells (in contrast to its NeuroVal analog) (PubMed:33244888). Does not show chemotaxis for polymorphonucleated leukocytes (PMNL) (By similarity). In vivo, has antinociceptive activity when intracerebroventricularly injected into mice (PubMed:27417686).</text>
</comment>
<comment type="subcellular location">
    <subcellularLocation>
        <location evidence="4">Secreted</location>
    </subcellularLocation>
</comment>
<comment type="tissue specificity">
    <text evidence="8">Expressed by the venom gland.</text>
</comment>
<comment type="biotechnology">
    <text evidence="2">Could be used to treat biofilm-resistant agents such as A.baumannii and Staphylococcus spp. coated on the surfaces of implanted medical devices, such as vascular stents.</text>
</comment>
<comment type="miscellaneous">
    <text evidence="7">The primary structure of this mature peptide is identical to that of Agelaia-MPI from Agelaia p. pallipes (AC P04205).</text>
</comment>
<comment type="similarity">
    <text evidence="7">Belongs to the MCD family. Mastoparan subfamily.</text>
</comment>
<evidence type="ECO:0000250" key="1">
    <source>
        <dbReference type="UniProtKB" id="P01514"/>
    </source>
</evidence>
<evidence type="ECO:0000250" key="2">
    <source>
        <dbReference type="UniProtKB" id="P04205"/>
    </source>
</evidence>
<evidence type="ECO:0000250" key="3">
    <source>
        <dbReference type="UniProtKB" id="P84914"/>
    </source>
</evidence>
<evidence type="ECO:0000269" key="4">
    <source>
    </source>
</evidence>
<evidence type="ECO:0000269" key="5">
    <source>
    </source>
</evidence>
<evidence type="ECO:0000303" key="6">
    <source>
    </source>
</evidence>
<evidence type="ECO:0000305" key="7"/>
<evidence type="ECO:0000305" key="8">
    <source>
    </source>
</evidence>
<organism>
    <name type="scientific">Parachartergus fraternus</name>
    <name type="common">Artistic wasp</name>
    <name type="synonym">Chartergus fraternus</name>
    <dbReference type="NCBI Taxonomy" id="91406"/>
    <lineage>
        <taxon>Eukaryota</taxon>
        <taxon>Metazoa</taxon>
        <taxon>Ecdysozoa</taxon>
        <taxon>Arthropoda</taxon>
        <taxon>Hexapoda</taxon>
        <taxon>Insecta</taxon>
        <taxon>Pterygota</taxon>
        <taxon>Neoptera</taxon>
        <taxon>Endopterygota</taxon>
        <taxon>Hymenoptera</taxon>
        <taxon>Apocrita</taxon>
        <taxon>Aculeata</taxon>
        <taxon>Vespoidea</taxon>
        <taxon>Vespidae</taxon>
        <taxon>Polistinae</taxon>
        <taxon>Epiponini</taxon>
        <taxon>Parachartergus</taxon>
    </lineage>
</organism>
<proteinExistence type="evidence at protein level"/>
<sequence length="14" mass="1568">INWLKLGKAIIDAL</sequence>
<accession>P0DRA8</accession>
<dbReference type="GO" id="GO:0005576">
    <property type="term" value="C:extracellular region"/>
    <property type="evidence" value="ECO:0007669"/>
    <property type="project" value="UniProtKB-SubCell"/>
</dbReference>
<dbReference type="GO" id="GO:0090729">
    <property type="term" value="F:toxin activity"/>
    <property type="evidence" value="ECO:0007669"/>
    <property type="project" value="UniProtKB-KW"/>
</dbReference>
<dbReference type="GO" id="GO:0042742">
    <property type="term" value="P:defense response to bacterium"/>
    <property type="evidence" value="ECO:0007669"/>
    <property type="project" value="UniProtKB-KW"/>
</dbReference>
<dbReference type="GO" id="GO:0050832">
    <property type="term" value="P:defense response to fungus"/>
    <property type="evidence" value="ECO:0007669"/>
    <property type="project" value="UniProtKB-KW"/>
</dbReference>
<dbReference type="GO" id="GO:0045087">
    <property type="term" value="P:innate immune response"/>
    <property type="evidence" value="ECO:0007669"/>
    <property type="project" value="UniProtKB-KW"/>
</dbReference>
<dbReference type="GO" id="GO:0031640">
    <property type="term" value="P:killing of cells of another organism"/>
    <property type="evidence" value="ECO:0007669"/>
    <property type="project" value="UniProtKB-KW"/>
</dbReference>
<dbReference type="InterPro" id="IPR013214">
    <property type="entry name" value="Mastoparan_peptide"/>
</dbReference>
<dbReference type="Pfam" id="PF08251">
    <property type="entry name" value="Mastoparan_2"/>
    <property type="match status" value="1"/>
</dbReference>